<organism>
    <name type="scientific">Frankia casuarinae (strain DSM 45818 / CECT 9043 / HFP020203 / CcI3)</name>
    <dbReference type="NCBI Taxonomy" id="106370"/>
    <lineage>
        <taxon>Bacteria</taxon>
        <taxon>Bacillati</taxon>
        <taxon>Actinomycetota</taxon>
        <taxon>Actinomycetes</taxon>
        <taxon>Frankiales</taxon>
        <taxon>Frankiaceae</taxon>
        <taxon>Frankia</taxon>
    </lineage>
</organism>
<evidence type="ECO:0000255" key="1">
    <source>
        <dbReference type="HAMAP-Rule" id="MF_00303"/>
    </source>
</evidence>
<evidence type="ECO:0000256" key="2">
    <source>
        <dbReference type="SAM" id="MobiDB-lite"/>
    </source>
</evidence>
<protein>
    <recommendedName>
        <fullName evidence="1">Trigger factor</fullName>
        <shortName evidence="1">TF</shortName>
        <ecNumber evidence="1">5.2.1.8</ecNumber>
    </recommendedName>
    <alternativeName>
        <fullName evidence="1">PPIase</fullName>
    </alternativeName>
</protein>
<proteinExistence type="inferred from homology"/>
<dbReference type="EC" id="5.2.1.8" evidence="1"/>
<dbReference type="EMBL" id="CP000249">
    <property type="protein sequence ID" value="ABD10582.1"/>
    <property type="molecule type" value="Genomic_DNA"/>
</dbReference>
<dbReference type="RefSeq" id="WP_011435648.1">
    <property type="nucleotide sequence ID" value="NZ_JENI01000118.1"/>
</dbReference>
<dbReference type="SMR" id="Q2JDR0"/>
<dbReference type="STRING" id="106370.Francci3_1204"/>
<dbReference type="KEGG" id="fra:Francci3_1204"/>
<dbReference type="eggNOG" id="COG0544">
    <property type="taxonomic scope" value="Bacteria"/>
</dbReference>
<dbReference type="HOGENOM" id="CLU_033058_3_0_11"/>
<dbReference type="OrthoDB" id="9767721at2"/>
<dbReference type="PhylomeDB" id="Q2JDR0"/>
<dbReference type="Proteomes" id="UP000001937">
    <property type="component" value="Chromosome"/>
</dbReference>
<dbReference type="GO" id="GO:0005737">
    <property type="term" value="C:cytoplasm"/>
    <property type="evidence" value="ECO:0007669"/>
    <property type="project" value="UniProtKB-SubCell"/>
</dbReference>
<dbReference type="GO" id="GO:0003755">
    <property type="term" value="F:peptidyl-prolyl cis-trans isomerase activity"/>
    <property type="evidence" value="ECO:0007669"/>
    <property type="project" value="UniProtKB-UniRule"/>
</dbReference>
<dbReference type="GO" id="GO:0044183">
    <property type="term" value="F:protein folding chaperone"/>
    <property type="evidence" value="ECO:0007669"/>
    <property type="project" value="TreeGrafter"/>
</dbReference>
<dbReference type="GO" id="GO:0043022">
    <property type="term" value="F:ribosome binding"/>
    <property type="evidence" value="ECO:0007669"/>
    <property type="project" value="TreeGrafter"/>
</dbReference>
<dbReference type="GO" id="GO:0051083">
    <property type="term" value="P:'de novo' cotranslational protein folding"/>
    <property type="evidence" value="ECO:0007669"/>
    <property type="project" value="TreeGrafter"/>
</dbReference>
<dbReference type="GO" id="GO:0051301">
    <property type="term" value="P:cell division"/>
    <property type="evidence" value="ECO:0007669"/>
    <property type="project" value="UniProtKB-KW"/>
</dbReference>
<dbReference type="GO" id="GO:0061077">
    <property type="term" value="P:chaperone-mediated protein folding"/>
    <property type="evidence" value="ECO:0007669"/>
    <property type="project" value="TreeGrafter"/>
</dbReference>
<dbReference type="GO" id="GO:0015031">
    <property type="term" value="P:protein transport"/>
    <property type="evidence" value="ECO:0007669"/>
    <property type="project" value="UniProtKB-UniRule"/>
</dbReference>
<dbReference type="GO" id="GO:0043335">
    <property type="term" value="P:protein unfolding"/>
    <property type="evidence" value="ECO:0007669"/>
    <property type="project" value="TreeGrafter"/>
</dbReference>
<dbReference type="Gene3D" id="3.10.50.40">
    <property type="match status" value="1"/>
</dbReference>
<dbReference type="Gene3D" id="3.30.70.1050">
    <property type="entry name" value="Trigger factor ribosome-binding domain"/>
    <property type="match status" value="1"/>
</dbReference>
<dbReference type="Gene3D" id="1.10.3120.10">
    <property type="entry name" value="Trigger factor, C-terminal domain"/>
    <property type="match status" value="1"/>
</dbReference>
<dbReference type="HAMAP" id="MF_00303">
    <property type="entry name" value="Trigger_factor_Tig"/>
    <property type="match status" value="1"/>
</dbReference>
<dbReference type="InterPro" id="IPR046357">
    <property type="entry name" value="PPIase_dom_sf"/>
</dbReference>
<dbReference type="InterPro" id="IPR001179">
    <property type="entry name" value="PPIase_FKBP_dom"/>
</dbReference>
<dbReference type="InterPro" id="IPR005215">
    <property type="entry name" value="Trig_fac"/>
</dbReference>
<dbReference type="InterPro" id="IPR008880">
    <property type="entry name" value="Trigger_fac_C"/>
</dbReference>
<dbReference type="InterPro" id="IPR037041">
    <property type="entry name" value="Trigger_fac_C_sf"/>
</dbReference>
<dbReference type="InterPro" id="IPR008881">
    <property type="entry name" value="Trigger_fac_ribosome-bd_bac"/>
</dbReference>
<dbReference type="InterPro" id="IPR036611">
    <property type="entry name" value="Trigger_fac_ribosome-bd_sf"/>
</dbReference>
<dbReference type="InterPro" id="IPR027304">
    <property type="entry name" value="Trigger_fact/SurA_dom_sf"/>
</dbReference>
<dbReference type="NCBIfam" id="TIGR00115">
    <property type="entry name" value="tig"/>
    <property type="match status" value="1"/>
</dbReference>
<dbReference type="PANTHER" id="PTHR30560">
    <property type="entry name" value="TRIGGER FACTOR CHAPERONE AND PEPTIDYL-PROLYL CIS/TRANS ISOMERASE"/>
    <property type="match status" value="1"/>
</dbReference>
<dbReference type="PANTHER" id="PTHR30560:SF3">
    <property type="entry name" value="TRIGGER FACTOR-LIKE PROTEIN TIG, CHLOROPLASTIC"/>
    <property type="match status" value="1"/>
</dbReference>
<dbReference type="Pfam" id="PF00254">
    <property type="entry name" value="FKBP_C"/>
    <property type="match status" value="1"/>
</dbReference>
<dbReference type="Pfam" id="PF05698">
    <property type="entry name" value="Trigger_C"/>
    <property type="match status" value="1"/>
</dbReference>
<dbReference type="Pfam" id="PF05697">
    <property type="entry name" value="Trigger_N"/>
    <property type="match status" value="1"/>
</dbReference>
<dbReference type="PIRSF" id="PIRSF003095">
    <property type="entry name" value="Trigger_factor"/>
    <property type="match status" value="1"/>
</dbReference>
<dbReference type="SUPFAM" id="SSF54534">
    <property type="entry name" value="FKBP-like"/>
    <property type="match status" value="1"/>
</dbReference>
<dbReference type="SUPFAM" id="SSF109998">
    <property type="entry name" value="Triger factor/SurA peptide-binding domain-like"/>
    <property type="match status" value="1"/>
</dbReference>
<dbReference type="SUPFAM" id="SSF102735">
    <property type="entry name" value="Trigger factor ribosome-binding domain"/>
    <property type="match status" value="1"/>
</dbReference>
<dbReference type="PROSITE" id="PS50059">
    <property type="entry name" value="FKBP_PPIASE"/>
    <property type="match status" value="1"/>
</dbReference>
<sequence>MKATKETLSPTRVKLTVEVPFDELKPSLEATYRKLARQVRVSGFRPGKVPPRILDQRLGRGVILDEAVQEALPQLYSEAVQAEEVDVLSRPEVDITEFADGGQLVFTAEVDVRPEVTLPEFSELEITVDAVEVTDEQVEEQLGALRDRFAVLTPVERAVQAGDYVSLDLSAEADGTPIDGAEATGLSYEVGSGNLVEGLDDAIIGATDGETRTFTTELLSGEQAGQPAQVTATVRGVKEKELPALDDDFATTASEFDTLDELRADIRTRLEQSRRTEQVGQAREKLLESLLERVEVPVPGSLLAGEIEAREHRLSRELEYIGTDRPSYLETLGQTEEEFDAEVRESAGKAIRSQFILDAVIDAESIGIDQGELMEQLILRAQRSGVQPDVYAQQLAQGEGLTALMADVLRTKALFLLLENAKVVDGAGTPVELALPARSQPDTDADADHDRDVTVAAEAVAPGDGDATVEPVEPVEAETDGNG</sequence>
<name>TIG_FRACC</name>
<feature type="chain" id="PRO_0000256561" description="Trigger factor">
    <location>
        <begin position="1"/>
        <end position="483"/>
    </location>
</feature>
<feature type="domain" description="PPIase FKBP-type" evidence="1">
    <location>
        <begin position="162"/>
        <end position="243"/>
    </location>
</feature>
<feature type="region of interest" description="Disordered" evidence="2">
    <location>
        <begin position="459"/>
        <end position="483"/>
    </location>
</feature>
<feature type="compositionally biased region" description="Acidic residues" evidence="2">
    <location>
        <begin position="473"/>
        <end position="483"/>
    </location>
</feature>
<accession>Q2JDR0</accession>
<comment type="function">
    <text evidence="1">Involved in protein export. Acts as a chaperone by maintaining the newly synthesized protein in an open conformation. Functions as a peptidyl-prolyl cis-trans isomerase.</text>
</comment>
<comment type="catalytic activity">
    <reaction evidence="1">
        <text>[protein]-peptidylproline (omega=180) = [protein]-peptidylproline (omega=0)</text>
        <dbReference type="Rhea" id="RHEA:16237"/>
        <dbReference type="Rhea" id="RHEA-COMP:10747"/>
        <dbReference type="Rhea" id="RHEA-COMP:10748"/>
        <dbReference type="ChEBI" id="CHEBI:83833"/>
        <dbReference type="ChEBI" id="CHEBI:83834"/>
        <dbReference type="EC" id="5.2.1.8"/>
    </reaction>
</comment>
<comment type="subcellular location">
    <subcellularLocation>
        <location>Cytoplasm</location>
    </subcellularLocation>
    <text evidence="1">About half TF is bound to the ribosome near the polypeptide exit tunnel while the other half is free in the cytoplasm.</text>
</comment>
<comment type="domain">
    <text evidence="1">Consists of 3 domains; the N-terminus binds the ribosome, the middle domain has PPIase activity, while the C-terminus has intrinsic chaperone activity on its own.</text>
</comment>
<comment type="similarity">
    <text evidence="1">Belongs to the FKBP-type PPIase family. Tig subfamily.</text>
</comment>
<keyword id="KW-0131">Cell cycle</keyword>
<keyword id="KW-0132">Cell division</keyword>
<keyword id="KW-0143">Chaperone</keyword>
<keyword id="KW-0963">Cytoplasm</keyword>
<keyword id="KW-0413">Isomerase</keyword>
<keyword id="KW-1185">Reference proteome</keyword>
<keyword id="KW-0697">Rotamase</keyword>
<gene>
    <name evidence="1" type="primary">tig</name>
    <name type="ordered locus">Francci3_1204</name>
</gene>
<reference key="1">
    <citation type="journal article" date="2007" name="Genome Res.">
        <title>Genome characteristics of facultatively symbiotic Frankia sp. strains reflect host range and host plant biogeography.</title>
        <authorList>
            <person name="Normand P."/>
            <person name="Lapierre P."/>
            <person name="Tisa L.S."/>
            <person name="Gogarten J.P."/>
            <person name="Alloisio N."/>
            <person name="Bagnarol E."/>
            <person name="Bassi C.A."/>
            <person name="Berry A.M."/>
            <person name="Bickhart D.M."/>
            <person name="Choisne N."/>
            <person name="Couloux A."/>
            <person name="Cournoyer B."/>
            <person name="Cruveiller S."/>
            <person name="Daubin V."/>
            <person name="Demange N."/>
            <person name="Francino M.P."/>
            <person name="Goltsman E."/>
            <person name="Huang Y."/>
            <person name="Kopp O.R."/>
            <person name="Labarre L."/>
            <person name="Lapidus A."/>
            <person name="Lavire C."/>
            <person name="Marechal J."/>
            <person name="Martinez M."/>
            <person name="Mastronunzio J.E."/>
            <person name="Mullin B.C."/>
            <person name="Niemann J."/>
            <person name="Pujic P."/>
            <person name="Rawnsley T."/>
            <person name="Rouy Z."/>
            <person name="Schenowitz C."/>
            <person name="Sellstedt A."/>
            <person name="Tavares F."/>
            <person name="Tomkins J.P."/>
            <person name="Vallenet D."/>
            <person name="Valverde C."/>
            <person name="Wall L.G."/>
            <person name="Wang Y."/>
            <person name="Medigue C."/>
            <person name="Benson D.R."/>
        </authorList>
    </citation>
    <scope>NUCLEOTIDE SEQUENCE [LARGE SCALE GENOMIC DNA]</scope>
    <source>
        <strain>DSM 45818 / CECT 9043 / HFP020203 / CcI3</strain>
    </source>
</reference>